<dbReference type="EMBL" id="AE017244">
    <property type="protein sequence ID" value="AAZ54012.1"/>
    <property type="molecule type" value="Genomic_DNA"/>
</dbReference>
<dbReference type="RefSeq" id="WP_011206502.1">
    <property type="nucleotide sequence ID" value="NC_007332.1"/>
</dbReference>
<dbReference type="SMR" id="Q4A777"/>
<dbReference type="GeneID" id="41334953"/>
<dbReference type="KEGG" id="mhp:MHP7448_0650"/>
<dbReference type="HOGENOM" id="CLU_046483_2_1_14"/>
<dbReference type="Proteomes" id="UP000000553">
    <property type="component" value="Chromosome"/>
</dbReference>
<dbReference type="GO" id="GO:0022627">
    <property type="term" value="C:cytosolic small ribosomal subunit"/>
    <property type="evidence" value="ECO:0007669"/>
    <property type="project" value="TreeGrafter"/>
</dbReference>
<dbReference type="GO" id="GO:0003723">
    <property type="term" value="F:RNA binding"/>
    <property type="evidence" value="ECO:0007669"/>
    <property type="project" value="TreeGrafter"/>
</dbReference>
<dbReference type="GO" id="GO:0003735">
    <property type="term" value="F:structural constituent of ribosome"/>
    <property type="evidence" value="ECO:0007669"/>
    <property type="project" value="InterPro"/>
</dbReference>
<dbReference type="GO" id="GO:0006412">
    <property type="term" value="P:translation"/>
    <property type="evidence" value="ECO:0007669"/>
    <property type="project" value="UniProtKB-UniRule"/>
</dbReference>
<dbReference type="FunFam" id="3.30.230.10:FF:000001">
    <property type="entry name" value="30S ribosomal protein S9"/>
    <property type="match status" value="1"/>
</dbReference>
<dbReference type="Gene3D" id="3.30.230.10">
    <property type="match status" value="1"/>
</dbReference>
<dbReference type="HAMAP" id="MF_00532_B">
    <property type="entry name" value="Ribosomal_uS9_B"/>
    <property type="match status" value="1"/>
</dbReference>
<dbReference type="InterPro" id="IPR020568">
    <property type="entry name" value="Ribosomal_Su5_D2-typ_SF"/>
</dbReference>
<dbReference type="InterPro" id="IPR000754">
    <property type="entry name" value="Ribosomal_uS9"/>
</dbReference>
<dbReference type="InterPro" id="IPR023035">
    <property type="entry name" value="Ribosomal_uS9_bac/plastid"/>
</dbReference>
<dbReference type="InterPro" id="IPR020574">
    <property type="entry name" value="Ribosomal_uS9_CS"/>
</dbReference>
<dbReference type="InterPro" id="IPR014721">
    <property type="entry name" value="Ribsml_uS5_D2-typ_fold_subgr"/>
</dbReference>
<dbReference type="NCBIfam" id="NF001099">
    <property type="entry name" value="PRK00132.1"/>
    <property type="match status" value="1"/>
</dbReference>
<dbReference type="PANTHER" id="PTHR21569">
    <property type="entry name" value="RIBOSOMAL PROTEIN S9"/>
    <property type="match status" value="1"/>
</dbReference>
<dbReference type="PANTHER" id="PTHR21569:SF1">
    <property type="entry name" value="SMALL RIBOSOMAL SUBUNIT PROTEIN US9M"/>
    <property type="match status" value="1"/>
</dbReference>
<dbReference type="Pfam" id="PF00380">
    <property type="entry name" value="Ribosomal_S9"/>
    <property type="match status" value="1"/>
</dbReference>
<dbReference type="SUPFAM" id="SSF54211">
    <property type="entry name" value="Ribosomal protein S5 domain 2-like"/>
    <property type="match status" value="1"/>
</dbReference>
<dbReference type="PROSITE" id="PS00360">
    <property type="entry name" value="RIBOSOMAL_S9"/>
    <property type="match status" value="1"/>
</dbReference>
<accession>Q4A777</accession>
<keyword id="KW-0687">Ribonucleoprotein</keyword>
<keyword id="KW-0689">Ribosomal protein</keyword>
<protein>
    <recommendedName>
        <fullName evidence="1">Small ribosomal subunit protein uS9</fullName>
    </recommendedName>
    <alternativeName>
        <fullName evidence="2">30S ribosomal protein S9</fullName>
    </alternativeName>
</protein>
<comment type="similarity">
    <text evidence="1">Belongs to the universal ribosomal protein uS9 family.</text>
</comment>
<reference key="1">
    <citation type="journal article" date="2005" name="J. Bacteriol.">
        <title>Swine and poultry pathogens: the complete genome sequences of two strains of Mycoplasma hyopneumoniae and a strain of Mycoplasma synoviae.</title>
        <authorList>
            <person name="Vasconcelos A.T.R."/>
            <person name="Ferreira H.B."/>
            <person name="Bizarro C.V."/>
            <person name="Bonatto S.L."/>
            <person name="Carvalho M.O."/>
            <person name="Pinto P.M."/>
            <person name="Almeida D.F."/>
            <person name="Almeida L.G.P."/>
            <person name="Almeida R."/>
            <person name="Alves-Junior L."/>
            <person name="Assuncao E.N."/>
            <person name="Azevedo V.A.C."/>
            <person name="Bogo M.R."/>
            <person name="Brigido M.M."/>
            <person name="Brocchi M."/>
            <person name="Burity H.A."/>
            <person name="Camargo A.A."/>
            <person name="Camargo S.S."/>
            <person name="Carepo M.S."/>
            <person name="Carraro D.M."/>
            <person name="de Mattos Cascardo J.C."/>
            <person name="Castro L.A."/>
            <person name="Cavalcanti G."/>
            <person name="Chemale G."/>
            <person name="Collevatti R.G."/>
            <person name="Cunha C.W."/>
            <person name="Dallagiovanna B."/>
            <person name="Dambros B.P."/>
            <person name="Dellagostin O.A."/>
            <person name="Falcao C."/>
            <person name="Fantinatti-Garboggini F."/>
            <person name="Felipe M.S.S."/>
            <person name="Fiorentin L."/>
            <person name="Franco G.R."/>
            <person name="Freitas N.S.A."/>
            <person name="Frias D."/>
            <person name="Grangeiro T.B."/>
            <person name="Grisard E.C."/>
            <person name="Guimaraes C.T."/>
            <person name="Hungria M."/>
            <person name="Jardim S.N."/>
            <person name="Krieger M.A."/>
            <person name="Laurino J.P."/>
            <person name="Lima L.F.A."/>
            <person name="Lopes M.I."/>
            <person name="Loreto E.L.S."/>
            <person name="Madeira H.M.F."/>
            <person name="Manfio G.P."/>
            <person name="Maranhao A.Q."/>
            <person name="Martinkovics C.T."/>
            <person name="Medeiros S.R.B."/>
            <person name="Moreira M.A.M."/>
            <person name="Neiva M."/>
            <person name="Ramalho-Neto C.E."/>
            <person name="Nicolas M.F."/>
            <person name="Oliveira S.C."/>
            <person name="Paixao R.F.C."/>
            <person name="Pedrosa F.O."/>
            <person name="Pena S.D.J."/>
            <person name="Pereira M."/>
            <person name="Pereira-Ferrari L."/>
            <person name="Piffer I."/>
            <person name="Pinto L.S."/>
            <person name="Potrich D.P."/>
            <person name="Salim A.C.M."/>
            <person name="Santos F.R."/>
            <person name="Schmitt R."/>
            <person name="Schneider M.P.C."/>
            <person name="Schrank A."/>
            <person name="Schrank I.S."/>
            <person name="Schuck A.F."/>
            <person name="Seuanez H.N."/>
            <person name="Silva D.W."/>
            <person name="Silva R."/>
            <person name="Silva S.C."/>
            <person name="Soares C.M.A."/>
            <person name="Souza K.R.L."/>
            <person name="Souza R.C."/>
            <person name="Staats C.C."/>
            <person name="Steffens M.B.R."/>
            <person name="Teixeira S.M.R."/>
            <person name="Urmenyi T.P."/>
            <person name="Vainstein M.H."/>
            <person name="Zuccherato L.W."/>
            <person name="Simpson A.J.G."/>
            <person name="Zaha A."/>
        </authorList>
    </citation>
    <scope>NUCLEOTIDE SEQUENCE [LARGE SCALE GENOMIC DNA]</scope>
    <source>
        <strain>7448</strain>
    </source>
</reference>
<feature type="chain" id="PRO_1000072522" description="Small ribosomal subunit protein uS9">
    <location>
        <begin position="1"/>
        <end position="132"/>
    </location>
</feature>
<name>RS9_MESH7</name>
<organism>
    <name type="scientific">Mesomycoplasma hyopneumoniae (strain 7448)</name>
    <name type="common">Mycoplasma hyopneumoniae</name>
    <dbReference type="NCBI Taxonomy" id="262722"/>
    <lineage>
        <taxon>Bacteria</taxon>
        <taxon>Bacillati</taxon>
        <taxon>Mycoplasmatota</taxon>
        <taxon>Mycoplasmoidales</taxon>
        <taxon>Metamycoplasmataceae</taxon>
        <taxon>Mesomycoplasma</taxon>
    </lineage>
</organism>
<sequence>MNQPELSYYGTGRRKSSVARVTLKHGNGQFKINNRVAKEYLKSDILIKDALQPLSITNTVSEFNIRVNAHGGGISGQAGAIRLGIARALLKVSADYRPGLKVAGMLTRDARAKERKKFGLRKARRARQFSKR</sequence>
<proteinExistence type="inferred from homology"/>
<gene>
    <name evidence="1" type="primary">rpsI</name>
    <name type="ordered locus">MHP7448_0650</name>
</gene>
<evidence type="ECO:0000255" key="1">
    <source>
        <dbReference type="HAMAP-Rule" id="MF_00532"/>
    </source>
</evidence>
<evidence type="ECO:0000305" key="2"/>